<sequence>MYAVLQSGGKQHRVSEGQTVRLEKLDIATGETVEFDQVMMIANGDDIQIGGPFVTGGKITAEVVAHGRGDKVMIVKFRRRKYFRKHQGHRQWFTDVKITGIGA</sequence>
<keyword id="KW-0687">Ribonucleoprotein</keyword>
<keyword id="KW-0689">Ribosomal protein</keyword>
<keyword id="KW-0694">RNA-binding</keyword>
<keyword id="KW-0699">rRNA-binding</keyword>
<gene>
    <name evidence="1" type="primary">rplU</name>
    <name type="ordered locus">SG0363</name>
</gene>
<comment type="function">
    <text evidence="1">This protein binds to 23S rRNA in the presence of protein L20.</text>
</comment>
<comment type="subunit">
    <text evidence="1">Part of the 50S ribosomal subunit. Contacts protein L20.</text>
</comment>
<comment type="similarity">
    <text evidence="1">Belongs to the bacterial ribosomal protein bL21 family.</text>
</comment>
<reference key="1">
    <citation type="journal article" date="2006" name="Genome Res.">
        <title>Massive genome erosion and functional adaptations provide insights into the symbiotic lifestyle of Sodalis glossinidius in the tsetse host.</title>
        <authorList>
            <person name="Toh H."/>
            <person name="Weiss B.L."/>
            <person name="Perkin S.A.H."/>
            <person name="Yamashita A."/>
            <person name="Oshima K."/>
            <person name="Hattori M."/>
            <person name="Aksoy S."/>
        </authorList>
    </citation>
    <scope>NUCLEOTIDE SEQUENCE [LARGE SCALE GENOMIC DNA]</scope>
    <source>
        <strain>morsitans</strain>
    </source>
</reference>
<proteinExistence type="inferred from homology"/>
<name>RL21_SODGM</name>
<accession>Q2NW37</accession>
<organism>
    <name type="scientific">Sodalis glossinidius (strain morsitans)</name>
    <dbReference type="NCBI Taxonomy" id="343509"/>
    <lineage>
        <taxon>Bacteria</taxon>
        <taxon>Pseudomonadati</taxon>
        <taxon>Pseudomonadota</taxon>
        <taxon>Gammaproteobacteria</taxon>
        <taxon>Enterobacterales</taxon>
        <taxon>Bruguierivoracaceae</taxon>
        <taxon>Sodalis</taxon>
    </lineage>
</organism>
<feature type="chain" id="PRO_0000269382" description="Large ribosomal subunit protein bL21">
    <location>
        <begin position="1"/>
        <end position="103"/>
    </location>
</feature>
<evidence type="ECO:0000255" key="1">
    <source>
        <dbReference type="HAMAP-Rule" id="MF_01363"/>
    </source>
</evidence>
<evidence type="ECO:0000305" key="2"/>
<dbReference type="EMBL" id="AP008232">
    <property type="protein sequence ID" value="BAE73638.1"/>
    <property type="molecule type" value="Genomic_DNA"/>
</dbReference>
<dbReference type="RefSeq" id="WP_011410226.1">
    <property type="nucleotide sequence ID" value="NC_007712.1"/>
</dbReference>
<dbReference type="SMR" id="Q2NW37"/>
<dbReference type="STRING" id="343509.SG0363"/>
<dbReference type="KEGG" id="sgl:SG0363"/>
<dbReference type="eggNOG" id="COG0261">
    <property type="taxonomic scope" value="Bacteria"/>
</dbReference>
<dbReference type="HOGENOM" id="CLU_061463_3_3_6"/>
<dbReference type="OrthoDB" id="9813334at2"/>
<dbReference type="Proteomes" id="UP000001932">
    <property type="component" value="Chromosome"/>
</dbReference>
<dbReference type="GO" id="GO:0005737">
    <property type="term" value="C:cytoplasm"/>
    <property type="evidence" value="ECO:0007669"/>
    <property type="project" value="UniProtKB-ARBA"/>
</dbReference>
<dbReference type="GO" id="GO:1990904">
    <property type="term" value="C:ribonucleoprotein complex"/>
    <property type="evidence" value="ECO:0007669"/>
    <property type="project" value="UniProtKB-KW"/>
</dbReference>
<dbReference type="GO" id="GO:0005840">
    <property type="term" value="C:ribosome"/>
    <property type="evidence" value="ECO:0007669"/>
    <property type="project" value="UniProtKB-KW"/>
</dbReference>
<dbReference type="GO" id="GO:0019843">
    <property type="term" value="F:rRNA binding"/>
    <property type="evidence" value="ECO:0007669"/>
    <property type="project" value="UniProtKB-UniRule"/>
</dbReference>
<dbReference type="GO" id="GO:0003735">
    <property type="term" value="F:structural constituent of ribosome"/>
    <property type="evidence" value="ECO:0007669"/>
    <property type="project" value="InterPro"/>
</dbReference>
<dbReference type="GO" id="GO:0006412">
    <property type="term" value="P:translation"/>
    <property type="evidence" value="ECO:0007669"/>
    <property type="project" value="UniProtKB-UniRule"/>
</dbReference>
<dbReference type="HAMAP" id="MF_01363">
    <property type="entry name" value="Ribosomal_bL21"/>
    <property type="match status" value="1"/>
</dbReference>
<dbReference type="InterPro" id="IPR028909">
    <property type="entry name" value="bL21-like"/>
</dbReference>
<dbReference type="InterPro" id="IPR036164">
    <property type="entry name" value="bL21-like_sf"/>
</dbReference>
<dbReference type="InterPro" id="IPR001787">
    <property type="entry name" value="Ribosomal_bL21"/>
</dbReference>
<dbReference type="InterPro" id="IPR018258">
    <property type="entry name" value="Ribosomal_bL21_CS"/>
</dbReference>
<dbReference type="NCBIfam" id="TIGR00061">
    <property type="entry name" value="L21"/>
    <property type="match status" value="1"/>
</dbReference>
<dbReference type="PANTHER" id="PTHR21349">
    <property type="entry name" value="50S RIBOSOMAL PROTEIN L21"/>
    <property type="match status" value="1"/>
</dbReference>
<dbReference type="PANTHER" id="PTHR21349:SF0">
    <property type="entry name" value="LARGE RIBOSOMAL SUBUNIT PROTEIN BL21M"/>
    <property type="match status" value="1"/>
</dbReference>
<dbReference type="Pfam" id="PF00829">
    <property type="entry name" value="Ribosomal_L21p"/>
    <property type="match status" value="1"/>
</dbReference>
<dbReference type="SUPFAM" id="SSF141091">
    <property type="entry name" value="L21p-like"/>
    <property type="match status" value="1"/>
</dbReference>
<dbReference type="PROSITE" id="PS01169">
    <property type="entry name" value="RIBOSOMAL_L21"/>
    <property type="match status" value="1"/>
</dbReference>
<protein>
    <recommendedName>
        <fullName evidence="1">Large ribosomal subunit protein bL21</fullName>
    </recommendedName>
    <alternativeName>
        <fullName evidence="2">50S ribosomal protein L21</fullName>
    </alternativeName>
</protein>